<gene>
    <name evidence="9" type="primary">SNPH</name>
    <name type="synonym">KIAA0374</name>
</gene>
<organism>
    <name type="scientific">Homo sapiens</name>
    <name type="common">Human</name>
    <dbReference type="NCBI Taxonomy" id="9606"/>
    <lineage>
        <taxon>Eukaryota</taxon>
        <taxon>Metazoa</taxon>
        <taxon>Chordata</taxon>
        <taxon>Craniata</taxon>
        <taxon>Vertebrata</taxon>
        <taxon>Euteleostomi</taxon>
        <taxon>Mammalia</taxon>
        <taxon>Eutheria</taxon>
        <taxon>Euarchontoglires</taxon>
        <taxon>Primates</taxon>
        <taxon>Haplorrhini</taxon>
        <taxon>Catarrhini</taxon>
        <taxon>Hominidae</taxon>
        <taxon>Homo</taxon>
    </lineage>
</organism>
<evidence type="ECO:0000250" key="1">
    <source>
        <dbReference type="UniProtKB" id="B5DF41"/>
    </source>
</evidence>
<evidence type="ECO:0000250" key="2">
    <source>
        <dbReference type="UniProtKB" id="Q80U23"/>
    </source>
</evidence>
<evidence type="ECO:0000255" key="3"/>
<evidence type="ECO:0000256" key="4">
    <source>
        <dbReference type="SAM" id="MobiDB-lite"/>
    </source>
</evidence>
<evidence type="ECO:0000269" key="5">
    <source>
    </source>
</evidence>
<evidence type="ECO:0000303" key="6">
    <source>
    </source>
</evidence>
<evidence type="ECO:0000303" key="7">
    <source>
    </source>
</evidence>
<evidence type="ECO:0000305" key="8"/>
<evidence type="ECO:0000312" key="9">
    <source>
        <dbReference type="HGNC" id="HGNC:15931"/>
    </source>
</evidence>
<sequence length="494" mass="53537">MAMSLPGSRRTSAGSRRRTSPPVSVRDAYGTSSLSSSSNSGSYKGSDSSPTPRRSMKYTLCSDNHGIKPPTPEQYLTPLQQKEVCIRHLKARLKDTQDRLQDRDTEIDDLKTQLSRMQEDWIEEECHRVEAQLALKEARKEIKQLKQVIDTVKNNLIDKDKGLQKYFVDINIQNKKLETLLHSMEVAQNGMAKEDGTGESAGGSPARSLTRSSTYTKLSDPAVCGDRQPGDPSSGSAEDGADSGFAAADDTLSRTDALEASSLLSSGVDCGTEETSLHSSFGLGPRFPASNTYEKLLCGMEAGVQASCMQERAIQTDFVQYQPDLDTILEKVTQAQVCGTDPESGDRCPELDAHPSGPRDPNSAVVVTVGDELEAPEPITRGPTPQRPGANPNPGQSVSVVCPMEEEEEAAVAEKEPKSYWSRHYIVDLLAVVVPAVPTVAWLCRSQRRQGQPIYNISSLLRGCCTVALHSIRRISCRSLSQPSPSPAGGGSQL</sequence>
<feature type="chain" id="PRO_0000072030" description="Syntaphilin">
    <location>
        <begin position="1"/>
        <end position="494"/>
    </location>
</feature>
<feature type="transmembrane region" description="Helical" evidence="3">
    <location>
        <begin position="425"/>
        <end position="444"/>
    </location>
</feature>
<feature type="region of interest" description="Disordered" evidence="4">
    <location>
        <begin position="1"/>
        <end position="75"/>
    </location>
</feature>
<feature type="region of interest" description="Disordered" evidence="4">
    <location>
        <begin position="191"/>
        <end position="246"/>
    </location>
</feature>
<feature type="region of interest" description="Disordered" evidence="4">
    <location>
        <begin position="338"/>
        <end position="398"/>
    </location>
</feature>
<feature type="coiled-coil region" evidence="3">
    <location>
        <begin position="79"/>
        <end position="161"/>
    </location>
</feature>
<feature type="compositionally biased region" description="Low complexity" evidence="4">
    <location>
        <begin position="7"/>
        <end position="49"/>
    </location>
</feature>
<feature type="compositionally biased region" description="Polar residues" evidence="4">
    <location>
        <begin position="207"/>
        <end position="217"/>
    </location>
</feature>
<feature type="compositionally biased region" description="Low complexity" evidence="4">
    <location>
        <begin position="230"/>
        <end position="246"/>
    </location>
</feature>
<feature type="compositionally biased region" description="Basic and acidic residues" evidence="4">
    <location>
        <begin position="344"/>
        <end position="353"/>
    </location>
</feature>
<feature type="modified residue" description="Phosphoserine" evidence="2">
    <location>
        <position position="200"/>
    </location>
</feature>
<feature type="modified residue" description="Phosphoserine" evidence="2">
    <location>
        <position position="204"/>
    </location>
</feature>
<feature type="modified residue" description="Phosphothreonine" evidence="2">
    <location>
        <position position="214"/>
    </location>
</feature>
<feature type="modified residue" description="Phosphoserine" evidence="2">
    <location>
        <position position="219"/>
    </location>
</feature>
<feature type="splice variant" id="VSP_037438" description="In isoform 2." evidence="6 7">
    <original>M</original>
    <variation>MPGSGPSERMTWPGPALSAGPPTRPLSSAPGIPPIPPLTRTHSLM</variation>
    <location>
        <position position="1"/>
    </location>
</feature>
<proteinExistence type="evidence at protein level"/>
<dbReference type="EMBL" id="AF187733">
    <property type="protein sequence ID" value="AAF29901.1"/>
    <property type="molecule type" value="mRNA"/>
</dbReference>
<dbReference type="EMBL" id="AB002372">
    <property type="protein sequence ID" value="BAA20829.2"/>
    <property type="status" value="ALT_INIT"/>
    <property type="molecule type" value="mRNA"/>
</dbReference>
<dbReference type="EMBL" id="AL136531">
    <property type="status" value="NOT_ANNOTATED_CDS"/>
    <property type="molecule type" value="Genomic_DNA"/>
</dbReference>
<dbReference type="EMBL" id="CH471133">
    <property type="protein sequence ID" value="EAX10643.1"/>
    <property type="molecule type" value="Genomic_DNA"/>
</dbReference>
<dbReference type="EMBL" id="BC035788">
    <property type="protein sequence ID" value="AAH35788.1"/>
    <property type="molecule type" value="mRNA"/>
</dbReference>
<dbReference type="CCDS" id="CCDS13012.1">
    <molecule id="O15079-1"/>
</dbReference>
<dbReference type="CCDS" id="CCDS82590.1">
    <molecule id="O15079-2"/>
</dbReference>
<dbReference type="RefSeq" id="NP_001305163.1">
    <molecule id="O15079-2"/>
    <property type="nucleotide sequence ID" value="NM_001318234.2"/>
</dbReference>
<dbReference type="RefSeq" id="NP_055538.2">
    <molecule id="O15079-1"/>
    <property type="nucleotide sequence ID" value="NM_014723.3"/>
</dbReference>
<dbReference type="RefSeq" id="XP_047296567.1">
    <molecule id="O15079-2"/>
    <property type="nucleotide sequence ID" value="XM_047440611.1"/>
</dbReference>
<dbReference type="RefSeq" id="XP_047296570.1">
    <molecule id="O15079-1"/>
    <property type="nucleotide sequence ID" value="XM_047440614.1"/>
</dbReference>
<dbReference type="RefSeq" id="XP_047296571.1">
    <molecule id="O15079-1"/>
    <property type="nucleotide sequence ID" value="XM_047440615.1"/>
</dbReference>
<dbReference type="RefSeq" id="XP_047296572.1">
    <molecule id="O15079-1"/>
    <property type="nucleotide sequence ID" value="XM_047440616.1"/>
</dbReference>
<dbReference type="RefSeq" id="XP_047296573.1">
    <molecule id="O15079-1"/>
    <property type="nucleotide sequence ID" value="XM_047440617.1"/>
</dbReference>
<dbReference type="RefSeq" id="XP_054180238.1">
    <molecule id="O15079-2"/>
    <property type="nucleotide sequence ID" value="XM_054324263.1"/>
</dbReference>
<dbReference type="RefSeq" id="XP_054180239.1">
    <molecule id="O15079-2"/>
    <property type="nucleotide sequence ID" value="XM_054324264.1"/>
</dbReference>
<dbReference type="RefSeq" id="XP_054180243.1">
    <molecule id="O15079-1"/>
    <property type="nucleotide sequence ID" value="XM_054324268.1"/>
</dbReference>
<dbReference type="RefSeq" id="XP_054180244.1">
    <molecule id="O15079-1"/>
    <property type="nucleotide sequence ID" value="XM_054324269.1"/>
</dbReference>
<dbReference type="RefSeq" id="XP_054180245.1">
    <molecule id="O15079-1"/>
    <property type="nucleotide sequence ID" value="XM_054324270.1"/>
</dbReference>
<dbReference type="RefSeq" id="XP_054180246.1">
    <molecule id="O15079-1"/>
    <property type="nucleotide sequence ID" value="XM_054324271.1"/>
</dbReference>
<dbReference type="SMR" id="O15079"/>
<dbReference type="BioGRID" id="115099">
    <property type="interactions" value="24"/>
</dbReference>
<dbReference type="FunCoup" id="O15079">
    <property type="interactions" value="238"/>
</dbReference>
<dbReference type="IntAct" id="O15079">
    <property type="interactions" value="7"/>
</dbReference>
<dbReference type="STRING" id="9606.ENSP00000371291"/>
<dbReference type="GlyGen" id="O15079">
    <property type="glycosylation" value="1 site"/>
</dbReference>
<dbReference type="iPTMnet" id="O15079"/>
<dbReference type="PhosphoSitePlus" id="O15079"/>
<dbReference type="SwissPalm" id="O15079"/>
<dbReference type="BioMuta" id="SNPH"/>
<dbReference type="MassIVE" id="O15079"/>
<dbReference type="PaxDb" id="9606-ENSP00000371297"/>
<dbReference type="PeptideAtlas" id="O15079"/>
<dbReference type="ProteomicsDB" id="48434">
    <molecule id="O15079-1"/>
</dbReference>
<dbReference type="ProteomicsDB" id="48435">
    <molecule id="O15079-2"/>
</dbReference>
<dbReference type="Antibodypedia" id="34949">
    <property type="antibodies" value="170 antibodies from 32 providers"/>
</dbReference>
<dbReference type="DNASU" id="9751"/>
<dbReference type="Ensembl" id="ENST00000381867.6">
    <molecule id="O15079-2"/>
    <property type="protein sequence ID" value="ENSP00000371291.1"/>
    <property type="gene ID" value="ENSG00000101298.15"/>
</dbReference>
<dbReference type="Ensembl" id="ENST00000381873.7">
    <molecule id="O15079-1"/>
    <property type="protein sequence ID" value="ENSP00000371297.3"/>
    <property type="gene ID" value="ENSG00000101298.15"/>
</dbReference>
<dbReference type="Ensembl" id="ENST00000614659.1">
    <molecule id="O15079-2"/>
    <property type="protein sequence ID" value="ENSP00000479696.1"/>
    <property type="gene ID" value="ENSG00000101298.15"/>
</dbReference>
<dbReference type="GeneID" id="9751"/>
<dbReference type="KEGG" id="hsa:9751"/>
<dbReference type="MANE-Select" id="ENST00000381867.6">
    <molecule id="O15079-2"/>
    <property type="protein sequence ID" value="ENSP00000371291.1"/>
    <property type="RefSeq nucleotide sequence ID" value="NM_001318234.2"/>
    <property type="RefSeq protein sequence ID" value="NP_001305163.1"/>
</dbReference>
<dbReference type="UCSC" id="uc002wes.4">
    <molecule id="O15079-1"/>
    <property type="organism name" value="human"/>
</dbReference>
<dbReference type="AGR" id="HGNC:15931"/>
<dbReference type="CTD" id="9751"/>
<dbReference type="DisGeNET" id="9751"/>
<dbReference type="GeneCards" id="SNPH"/>
<dbReference type="HGNC" id="HGNC:15931">
    <property type="gene designation" value="SNPH"/>
</dbReference>
<dbReference type="HPA" id="ENSG00000101298">
    <property type="expression patterns" value="Tissue enriched (brain)"/>
</dbReference>
<dbReference type="MIM" id="604942">
    <property type="type" value="gene"/>
</dbReference>
<dbReference type="neXtProt" id="NX_O15079"/>
<dbReference type="OpenTargets" id="ENSG00000101298"/>
<dbReference type="PharmGKB" id="PA38053"/>
<dbReference type="VEuPathDB" id="HostDB:ENSG00000101298"/>
<dbReference type="eggNOG" id="ENOG502QUYH">
    <property type="taxonomic scope" value="Eukaryota"/>
</dbReference>
<dbReference type="GeneTree" id="ENSGT00520000055634"/>
<dbReference type="HOGENOM" id="CLU_019458_1_0_1"/>
<dbReference type="InParanoid" id="O15079"/>
<dbReference type="OMA" id="DFAQYQP"/>
<dbReference type="OrthoDB" id="5807119at2759"/>
<dbReference type="PAN-GO" id="O15079">
    <property type="GO annotations" value="3 GO annotations based on evolutionary models"/>
</dbReference>
<dbReference type="PhylomeDB" id="O15079"/>
<dbReference type="TreeFam" id="TF332407"/>
<dbReference type="PathwayCommons" id="O15079"/>
<dbReference type="SignaLink" id="O15079"/>
<dbReference type="BioGRID-ORCS" id="9751">
    <property type="hits" value="10 hits in 1153 CRISPR screens"/>
</dbReference>
<dbReference type="CD-CODE" id="FB4E32DD">
    <property type="entry name" value="Presynaptic clusters and postsynaptic densities"/>
</dbReference>
<dbReference type="ChiTaRS" id="SNPH">
    <property type="organism name" value="human"/>
</dbReference>
<dbReference type="GenomeRNAi" id="9751"/>
<dbReference type="Pharos" id="O15079">
    <property type="development level" value="Tbio"/>
</dbReference>
<dbReference type="PRO" id="PR:O15079"/>
<dbReference type="Proteomes" id="UP000005640">
    <property type="component" value="Chromosome 20"/>
</dbReference>
<dbReference type="RNAct" id="O15079">
    <property type="molecule type" value="protein"/>
</dbReference>
<dbReference type="Bgee" id="ENSG00000101298">
    <property type="expression patterns" value="Expressed in CA1 field of hippocampus and 170 other cell types or tissues"/>
</dbReference>
<dbReference type="ExpressionAtlas" id="O15079">
    <property type="expression patterns" value="baseline and differential"/>
</dbReference>
<dbReference type="GO" id="GO:0005737">
    <property type="term" value="C:cytoplasm"/>
    <property type="evidence" value="ECO:0000314"/>
    <property type="project" value="UniProtKB"/>
</dbReference>
<dbReference type="GO" id="GO:0005881">
    <property type="term" value="C:cytoplasmic microtubule"/>
    <property type="evidence" value="ECO:0000314"/>
    <property type="project" value="UniProtKB"/>
</dbReference>
<dbReference type="GO" id="GO:0016020">
    <property type="term" value="C:membrane"/>
    <property type="evidence" value="ECO:0007669"/>
    <property type="project" value="UniProtKB-SubCell"/>
</dbReference>
<dbReference type="GO" id="GO:0005739">
    <property type="term" value="C:mitochondrion"/>
    <property type="evidence" value="ECO:0006056"/>
    <property type="project" value="FlyBase"/>
</dbReference>
<dbReference type="GO" id="GO:0043005">
    <property type="term" value="C:neuron projection"/>
    <property type="evidence" value="ECO:0007669"/>
    <property type="project" value="UniProtKB-KW"/>
</dbReference>
<dbReference type="GO" id="GO:0098793">
    <property type="term" value="C:presynapse"/>
    <property type="evidence" value="ECO:0007669"/>
    <property type="project" value="GOC"/>
</dbReference>
<dbReference type="GO" id="GO:0017075">
    <property type="term" value="F:syntaxin-1 binding"/>
    <property type="evidence" value="ECO:0000303"/>
    <property type="project" value="UniProtKB"/>
</dbReference>
<dbReference type="GO" id="GO:0030182">
    <property type="term" value="P:neuron differentiation"/>
    <property type="evidence" value="ECO:0000318"/>
    <property type="project" value="GO_Central"/>
</dbReference>
<dbReference type="GO" id="GO:0007269">
    <property type="term" value="P:neurotransmitter secretion"/>
    <property type="evidence" value="ECO:0000303"/>
    <property type="project" value="UniProtKB"/>
</dbReference>
<dbReference type="GO" id="GO:0016081">
    <property type="term" value="P:synaptic vesicle docking"/>
    <property type="evidence" value="ECO:0000303"/>
    <property type="project" value="UniProtKB"/>
</dbReference>
<dbReference type="InterPro" id="IPR028197">
    <property type="entry name" value="Syntaphilin/Syntabulin"/>
</dbReference>
<dbReference type="PANTHER" id="PTHR16208">
    <property type="entry name" value="MICROTUBULE-ASSOCIATED PROTEIN/SYNTAPHILIN"/>
    <property type="match status" value="1"/>
</dbReference>
<dbReference type="PANTHER" id="PTHR16208:SF1">
    <property type="entry name" value="SYNTAPHILIN"/>
    <property type="match status" value="1"/>
</dbReference>
<dbReference type="Pfam" id="PF15290">
    <property type="entry name" value="Syntaphilin"/>
    <property type="match status" value="1"/>
</dbReference>
<comment type="function">
    <text evidence="5">Inhibits SNARE complex formation by absorbing free STX1A.</text>
</comment>
<comment type="subunit">
    <text evidence="1 5">Binds to STX1A (PubMed:10707983). Interacts with DNM1; this interaction inhibits the binding of DNM1 to AMPH and DNM1-receptor-mediated endocytosis (By similarity).</text>
</comment>
<comment type="interaction">
    <interactant intactId="EBI-4401902">
        <id>O15079</id>
    </interactant>
    <interactant intactId="EBI-724719">
        <id>Q9UI12</id>
        <label>ATP6V1H</label>
    </interactant>
    <organismsDiffer>false</organismsDiffer>
    <experiments>3</experiments>
</comment>
<comment type="interaction">
    <interactant intactId="EBI-4401902">
        <id>O15079</id>
    </interactant>
    <interactant intactId="EBI-17589229">
        <id>Q6NTF9-3</id>
        <label>RHBDD2</label>
    </interactant>
    <organismsDiffer>false</organismsDiffer>
    <experiments>3</experiments>
</comment>
<comment type="interaction">
    <interactant intactId="EBI-4401902">
        <id>O15079</id>
    </interactant>
    <interactant intactId="EBI-295222">
        <id>P23025</id>
        <label>XPA</label>
    </interactant>
    <organismsDiffer>false</organismsDiffer>
    <experiments>3</experiments>
</comment>
<comment type="subcellular location">
    <subcellularLocation>
        <location evidence="8">Membrane</location>
        <topology evidence="8">Single-pass membrane protein</topology>
    </subcellularLocation>
    <subcellularLocation>
        <location>Synapse</location>
        <location>Synaptosome</location>
    </subcellularLocation>
</comment>
<comment type="alternative products">
    <event type="alternative splicing"/>
    <isoform>
        <id>O15079-1</id>
        <name>1</name>
        <sequence type="displayed"/>
    </isoform>
    <isoform>
        <id>O15079-2</id>
        <name>2</name>
        <sequence type="described" ref="VSP_037438"/>
    </isoform>
</comment>
<comment type="tissue specificity">
    <text evidence="5">Brain specific. Found in synapses.</text>
</comment>
<comment type="sequence caution" evidence="8">
    <conflict type="erroneous initiation">
        <sequence resource="EMBL-CDS" id="BAA20829"/>
    </conflict>
    <text>Extended N-terminus.</text>
</comment>
<accession>O15079</accession>
<accession>Q8IYI3</accession>
<keyword id="KW-0025">Alternative splicing</keyword>
<keyword id="KW-0175">Coiled coil</keyword>
<keyword id="KW-0472">Membrane</keyword>
<keyword id="KW-0597">Phosphoprotein</keyword>
<keyword id="KW-1267">Proteomics identification</keyword>
<keyword id="KW-1185">Reference proteome</keyword>
<keyword id="KW-0770">Synapse</keyword>
<keyword id="KW-0771">Synaptosome</keyword>
<keyword id="KW-0812">Transmembrane</keyword>
<keyword id="KW-1133">Transmembrane helix</keyword>
<name>SNPH_HUMAN</name>
<protein>
    <recommendedName>
        <fullName evidence="6">Syntaphilin</fullName>
    </recommendedName>
</protein>
<reference key="1">
    <citation type="journal article" date="2000" name="Neuron">
        <title>Syntaphilin: a syntaxin-1 clamp that controls SNARE assembly.</title>
        <authorList>
            <person name="Lao G."/>
            <person name="Scheuss V."/>
            <person name="Gerwin C.M."/>
            <person name="Su Q."/>
            <person name="Mochida S."/>
            <person name="Rettig J."/>
            <person name="Sheng Z.-H."/>
        </authorList>
    </citation>
    <scope>NUCLEOTIDE SEQUENCE [MRNA] (ISOFORM 2)</scope>
    <scope>FUNCTION</scope>
    <scope>INTERACTION WITH STX1A</scope>
    <scope>TISSUE SPECIFICITY</scope>
    <source>
        <tissue>Brain</tissue>
    </source>
</reference>
<reference key="2">
    <citation type="journal article" date="1997" name="DNA Res.">
        <title>Prediction of the coding sequences of unidentified human genes. VII. The complete sequences of 100 new cDNA clones from brain which can code for large proteins in vitro.</title>
        <authorList>
            <person name="Nagase T."/>
            <person name="Ishikawa K."/>
            <person name="Nakajima D."/>
            <person name="Ohira M."/>
            <person name="Seki N."/>
            <person name="Miyajima N."/>
            <person name="Tanaka A."/>
            <person name="Kotani H."/>
            <person name="Nomura N."/>
            <person name="Ohara O."/>
        </authorList>
    </citation>
    <scope>NUCLEOTIDE SEQUENCE [LARGE SCALE MRNA] (ISOFORM 2)</scope>
    <source>
        <tissue>Brain</tissue>
    </source>
</reference>
<reference key="3">
    <citation type="journal article" date="2001" name="Nature">
        <title>The DNA sequence and comparative analysis of human chromosome 20.</title>
        <authorList>
            <person name="Deloukas P."/>
            <person name="Matthews L.H."/>
            <person name="Ashurst J.L."/>
            <person name="Burton J."/>
            <person name="Gilbert J.G.R."/>
            <person name="Jones M."/>
            <person name="Stavrides G."/>
            <person name="Almeida J.P."/>
            <person name="Babbage A.K."/>
            <person name="Bagguley C.L."/>
            <person name="Bailey J."/>
            <person name="Barlow K.F."/>
            <person name="Bates K.N."/>
            <person name="Beard L.M."/>
            <person name="Beare D.M."/>
            <person name="Beasley O.P."/>
            <person name="Bird C.P."/>
            <person name="Blakey S.E."/>
            <person name="Bridgeman A.M."/>
            <person name="Brown A.J."/>
            <person name="Buck D."/>
            <person name="Burrill W.D."/>
            <person name="Butler A.P."/>
            <person name="Carder C."/>
            <person name="Carter N.P."/>
            <person name="Chapman J.C."/>
            <person name="Clamp M."/>
            <person name="Clark G."/>
            <person name="Clark L.N."/>
            <person name="Clark S.Y."/>
            <person name="Clee C.M."/>
            <person name="Clegg S."/>
            <person name="Cobley V.E."/>
            <person name="Collier R.E."/>
            <person name="Connor R.E."/>
            <person name="Corby N.R."/>
            <person name="Coulson A."/>
            <person name="Coville G.J."/>
            <person name="Deadman R."/>
            <person name="Dhami P.D."/>
            <person name="Dunn M."/>
            <person name="Ellington A.G."/>
            <person name="Frankland J.A."/>
            <person name="Fraser A."/>
            <person name="French L."/>
            <person name="Garner P."/>
            <person name="Grafham D.V."/>
            <person name="Griffiths C."/>
            <person name="Griffiths M.N.D."/>
            <person name="Gwilliam R."/>
            <person name="Hall R.E."/>
            <person name="Hammond S."/>
            <person name="Harley J.L."/>
            <person name="Heath P.D."/>
            <person name="Ho S."/>
            <person name="Holden J.L."/>
            <person name="Howden P.J."/>
            <person name="Huckle E."/>
            <person name="Hunt A.R."/>
            <person name="Hunt S.E."/>
            <person name="Jekosch K."/>
            <person name="Johnson C.M."/>
            <person name="Johnson D."/>
            <person name="Kay M.P."/>
            <person name="Kimberley A.M."/>
            <person name="King A."/>
            <person name="Knights A."/>
            <person name="Laird G.K."/>
            <person name="Lawlor S."/>
            <person name="Lehvaeslaiho M.H."/>
            <person name="Leversha M.A."/>
            <person name="Lloyd C."/>
            <person name="Lloyd D.M."/>
            <person name="Lovell J.D."/>
            <person name="Marsh V.L."/>
            <person name="Martin S.L."/>
            <person name="McConnachie L.J."/>
            <person name="McLay K."/>
            <person name="McMurray A.A."/>
            <person name="Milne S.A."/>
            <person name="Mistry D."/>
            <person name="Moore M.J.F."/>
            <person name="Mullikin J.C."/>
            <person name="Nickerson T."/>
            <person name="Oliver K."/>
            <person name="Parker A."/>
            <person name="Patel R."/>
            <person name="Pearce T.A.V."/>
            <person name="Peck A.I."/>
            <person name="Phillimore B.J.C.T."/>
            <person name="Prathalingam S.R."/>
            <person name="Plumb R.W."/>
            <person name="Ramsay H."/>
            <person name="Rice C.M."/>
            <person name="Ross M.T."/>
            <person name="Scott C.E."/>
            <person name="Sehra H.K."/>
            <person name="Shownkeen R."/>
            <person name="Sims S."/>
            <person name="Skuce C.D."/>
            <person name="Smith M.L."/>
            <person name="Soderlund C."/>
            <person name="Steward C.A."/>
            <person name="Sulston J.E."/>
            <person name="Swann R.M."/>
            <person name="Sycamore N."/>
            <person name="Taylor R."/>
            <person name="Tee L."/>
            <person name="Thomas D.W."/>
            <person name="Thorpe A."/>
            <person name="Tracey A."/>
            <person name="Tromans A.C."/>
            <person name="Vaudin M."/>
            <person name="Wall M."/>
            <person name="Wallis J.M."/>
            <person name="Whitehead S.L."/>
            <person name="Whittaker P."/>
            <person name="Willey D.L."/>
            <person name="Williams L."/>
            <person name="Williams S.A."/>
            <person name="Wilming L."/>
            <person name="Wray P.W."/>
            <person name="Hubbard T."/>
            <person name="Durbin R.M."/>
            <person name="Bentley D.R."/>
            <person name="Beck S."/>
            <person name="Rogers J."/>
        </authorList>
    </citation>
    <scope>NUCLEOTIDE SEQUENCE [LARGE SCALE GENOMIC DNA]</scope>
</reference>
<reference key="4">
    <citation type="submission" date="2005-09" db="EMBL/GenBank/DDBJ databases">
        <authorList>
            <person name="Mural R.J."/>
            <person name="Istrail S."/>
            <person name="Sutton G.G."/>
            <person name="Florea L."/>
            <person name="Halpern A.L."/>
            <person name="Mobarry C.M."/>
            <person name="Lippert R."/>
            <person name="Walenz B."/>
            <person name="Shatkay H."/>
            <person name="Dew I."/>
            <person name="Miller J.R."/>
            <person name="Flanigan M.J."/>
            <person name="Edwards N.J."/>
            <person name="Bolanos R."/>
            <person name="Fasulo D."/>
            <person name="Halldorsson B.V."/>
            <person name="Hannenhalli S."/>
            <person name="Turner R."/>
            <person name="Yooseph S."/>
            <person name="Lu F."/>
            <person name="Nusskern D.R."/>
            <person name="Shue B.C."/>
            <person name="Zheng X.H."/>
            <person name="Zhong F."/>
            <person name="Delcher A.L."/>
            <person name="Huson D.H."/>
            <person name="Kravitz S.A."/>
            <person name="Mouchard L."/>
            <person name="Reinert K."/>
            <person name="Remington K.A."/>
            <person name="Clark A.G."/>
            <person name="Waterman M.S."/>
            <person name="Eichler E.E."/>
            <person name="Adams M.D."/>
            <person name="Hunkapiller M.W."/>
            <person name="Myers E.W."/>
            <person name="Venter J.C."/>
        </authorList>
    </citation>
    <scope>NUCLEOTIDE SEQUENCE [LARGE SCALE GENOMIC DNA]</scope>
</reference>
<reference key="5">
    <citation type="journal article" date="2004" name="Genome Res.">
        <title>The status, quality, and expansion of the NIH full-length cDNA project: the Mammalian Gene Collection (MGC).</title>
        <authorList>
            <consortium name="The MGC Project Team"/>
        </authorList>
    </citation>
    <scope>NUCLEOTIDE SEQUENCE [LARGE SCALE MRNA] (ISOFORM 1)</scope>
    <source>
        <tissue>Brain</tissue>
    </source>
</reference>